<protein>
    <recommendedName>
        <fullName evidence="1">Peptidyl-tRNA hydrolase</fullName>
        <shortName evidence="1">Pth</shortName>
        <ecNumber evidence="1">3.1.1.29</ecNumber>
    </recommendedName>
</protein>
<evidence type="ECO:0000255" key="1">
    <source>
        <dbReference type="HAMAP-Rule" id="MF_00083"/>
    </source>
</evidence>
<reference key="1">
    <citation type="submission" date="2008-04" db="EMBL/GenBank/DDBJ databases">
        <title>Complete sequence of chromosome of Methylobacterium populi BJ001.</title>
        <authorList>
            <consortium name="US DOE Joint Genome Institute"/>
            <person name="Copeland A."/>
            <person name="Lucas S."/>
            <person name="Lapidus A."/>
            <person name="Glavina del Rio T."/>
            <person name="Dalin E."/>
            <person name="Tice H."/>
            <person name="Bruce D."/>
            <person name="Goodwin L."/>
            <person name="Pitluck S."/>
            <person name="Chertkov O."/>
            <person name="Brettin T."/>
            <person name="Detter J.C."/>
            <person name="Han C."/>
            <person name="Kuske C.R."/>
            <person name="Schmutz J."/>
            <person name="Larimer F."/>
            <person name="Land M."/>
            <person name="Hauser L."/>
            <person name="Kyrpides N."/>
            <person name="Mikhailova N."/>
            <person name="Marx C."/>
            <person name="Richardson P."/>
        </authorList>
    </citation>
    <scope>NUCLEOTIDE SEQUENCE [LARGE SCALE GENOMIC DNA]</scope>
    <source>
        <strain>ATCC BAA-705 / NCIMB 13946 / BJ001</strain>
    </source>
</reference>
<gene>
    <name evidence="1" type="primary">pth</name>
    <name type="ordered locus">Mpop_2402</name>
</gene>
<feature type="chain" id="PRO_1000092956" description="Peptidyl-tRNA hydrolase">
    <location>
        <begin position="1"/>
        <end position="210"/>
    </location>
</feature>
<feature type="active site" description="Proton acceptor" evidence="1">
    <location>
        <position position="19"/>
    </location>
</feature>
<feature type="binding site" evidence="1">
    <location>
        <position position="14"/>
    </location>
    <ligand>
        <name>tRNA</name>
        <dbReference type="ChEBI" id="CHEBI:17843"/>
    </ligand>
</feature>
<feature type="binding site" evidence="1">
    <location>
        <position position="64"/>
    </location>
    <ligand>
        <name>tRNA</name>
        <dbReference type="ChEBI" id="CHEBI:17843"/>
    </ligand>
</feature>
<feature type="binding site" evidence="1">
    <location>
        <position position="66"/>
    </location>
    <ligand>
        <name>tRNA</name>
        <dbReference type="ChEBI" id="CHEBI:17843"/>
    </ligand>
</feature>
<feature type="binding site" evidence="1">
    <location>
        <position position="112"/>
    </location>
    <ligand>
        <name>tRNA</name>
        <dbReference type="ChEBI" id="CHEBI:17843"/>
    </ligand>
</feature>
<feature type="site" description="Discriminates between blocked and unblocked aminoacyl-tRNA" evidence="1">
    <location>
        <position position="9"/>
    </location>
</feature>
<feature type="site" description="Stabilizes the basic form of H active site to accept a proton" evidence="1">
    <location>
        <position position="91"/>
    </location>
</feature>
<comment type="function">
    <text evidence="1">Hydrolyzes ribosome-free peptidyl-tRNAs (with 1 or more amino acids incorporated), which drop off the ribosome during protein synthesis, or as a result of ribosome stalling.</text>
</comment>
<comment type="function">
    <text evidence="1">Catalyzes the release of premature peptidyl moieties from peptidyl-tRNA molecules trapped in stalled 50S ribosomal subunits, and thus maintains levels of free tRNAs and 50S ribosomes.</text>
</comment>
<comment type="catalytic activity">
    <reaction evidence="1">
        <text>an N-acyl-L-alpha-aminoacyl-tRNA + H2O = an N-acyl-L-amino acid + a tRNA + H(+)</text>
        <dbReference type="Rhea" id="RHEA:54448"/>
        <dbReference type="Rhea" id="RHEA-COMP:10123"/>
        <dbReference type="Rhea" id="RHEA-COMP:13883"/>
        <dbReference type="ChEBI" id="CHEBI:15377"/>
        <dbReference type="ChEBI" id="CHEBI:15378"/>
        <dbReference type="ChEBI" id="CHEBI:59874"/>
        <dbReference type="ChEBI" id="CHEBI:78442"/>
        <dbReference type="ChEBI" id="CHEBI:138191"/>
        <dbReference type="EC" id="3.1.1.29"/>
    </reaction>
</comment>
<comment type="subunit">
    <text evidence="1">Monomer.</text>
</comment>
<comment type="subcellular location">
    <subcellularLocation>
        <location evidence="1">Cytoplasm</location>
    </subcellularLocation>
</comment>
<comment type="similarity">
    <text evidence="1">Belongs to the PTH family.</text>
</comment>
<organism>
    <name type="scientific">Methylorubrum populi (strain ATCC BAA-705 / NCIMB 13946 / BJ001)</name>
    <name type="common">Methylobacterium populi</name>
    <dbReference type="NCBI Taxonomy" id="441620"/>
    <lineage>
        <taxon>Bacteria</taxon>
        <taxon>Pseudomonadati</taxon>
        <taxon>Pseudomonadota</taxon>
        <taxon>Alphaproteobacteria</taxon>
        <taxon>Hyphomicrobiales</taxon>
        <taxon>Methylobacteriaceae</taxon>
        <taxon>Methylorubrum</taxon>
    </lineage>
</organism>
<proteinExistence type="inferred from homology"/>
<name>PTH_METPB</name>
<keyword id="KW-0963">Cytoplasm</keyword>
<keyword id="KW-0378">Hydrolase</keyword>
<keyword id="KW-0694">RNA-binding</keyword>
<keyword id="KW-0820">tRNA-binding</keyword>
<sequence>MRLIVGLGNPGQRYARNRHNIGFMAVDEIARVHRAAPFRRRFQGEAAEVMLGSERAILLKPQTFMNESGRSVGEAQRFFKIPLSDVIVLHDELDLAPAKLRVKLGGGNAGHNGLRSITALCGNDYRRVRLGIGHPGDKALVHAYVLNDFAKSEEPWVEDLCRATADHAPLLAAGEDASFQNKVHLAMAGRGWDAVKTPAEAGKAKARDAN</sequence>
<accession>B1Z9F8</accession>
<dbReference type="EC" id="3.1.1.29" evidence="1"/>
<dbReference type="EMBL" id="CP001029">
    <property type="protein sequence ID" value="ACB80564.1"/>
    <property type="molecule type" value="Genomic_DNA"/>
</dbReference>
<dbReference type="RefSeq" id="WP_012454295.1">
    <property type="nucleotide sequence ID" value="NC_010725.1"/>
</dbReference>
<dbReference type="SMR" id="B1Z9F8"/>
<dbReference type="STRING" id="441620.Mpop_2402"/>
<dbReference type="KEGG" id="mpo:Mpop_2402"/>
<dbReference type="eggNOG" id="COG0193">
    <property type="taxonomic scope" value="Bacteria"/>
</dbReference>
<dbReference type="HOGENOM" id="CLU_062456_1_0_5"/>
<dbReference type="OrthoDB" id="9800507at2"/>
<dbReference type="Proteomes" id="UP000007136">
    <property type="component" value="Chromosome"/>
</dbReference>
<dbReference type="GO" id="GO:0005737">
    <property type="term" value="C:cytoplasm"/>
    <property type="evidence" value="ECO:0007669"/>
    <property type="project" value="UniProtKB-SubCell"/>
</dbReference>
<dbReference type="GO" id="GO:0004045">
    <property type="term" value="F:peptidyl-tRNA hydrolase activity"/>
    <property type="evidence" value="ECO:0007669"/>
    <property type="project" value="UniProtKB-UniRule"/>
</dbReference>
<dbReference type="GO" id="GO:0000049">
    <property type="term" value="F:tRNA binding"/>
    <property type="evidence" value="ECO:0007669"/>
    <property type="project" value="UniProtKB-UniRule"/>
</dbReference>
<dbReference type="GO" id="GO:0006515">
    <property type="term" value="P:protein quality control for misfolded or incompletely synthesized proteins"/>
    <property type="evidence" value="ECO:0007669"/>
    <property type="project" value="UniProtKB-UniRule"/>
</dbReference>
<dbReference type="GO" id="GO:0072344">
    <property type="term" value="P:rescue of stalled ribosome"/>
    <property type="evidence" value="ECO:0007669"/>
    <property type="project" value="UniProtKB-UniRule"/>
</dbReference>
<dbReference type="CDD" id="cd00462">
    <property type="entry name" value="PTH"/>
    <property type="match status" value="1"/>
</dbReference>
<dbReference type="FunFam" id="3.40.50.1470:FF:000001">
    <property type="entry name" value="Peptidyl-tRNA hydrolase"/>
    <property type="match status" value="1"/>
</dbReference>
<dbReference type="Gene3D" id="3.40.50.1470">
    <property type="entry name" value="Peptidyl-tRNA hydrolase"/>
    <property type="match status" value="1"/>
</dbReference>
<dbReference type="HAMAP" id="MF_00083">
    <property type="entry name" value="Pept_tRNA_hydro_bact"/>
    <property type="match status" value="1"/>
</dbReference>
<dbReference type="InterPro" id="IPR001328">
    <property type="entry name" value="Pept_tRNA_hydro"/>
</dbReference>
<dbReference type="InterPro" id="IPR018171">
    <property type="entry name" value="Pept_tRNA_hydro_CS"/>
</dbReference>
<dbReference type="InterPro" id="IPR036416">
    <property type="entry name" value="Pept_tRNA_hydro_sf"/>
</dbReference>
<dbReference type="NCBIfam" id="TIGR00447">
    <property type="entry name" value="pth"/>
    <property type="match status" value="1"/>
</dbReference>
<dbReference type="PANTHER" id="PTHR17224">
    <property type="entry name" value="PEPTIDYL-TRNA HYDROLASE"/>
    <property type="match status" value="1"/>
</dbReference>
<dbReference type="PANTHER" id="PTHR17224:SF1">
    <property type="entry name" value="PEPTIDYL-TRNA HYDROLASE"/>
    <property type="match status" value="1"/>
</dbReference>
<dbReference type="Pfam" id="PF01195">
    <property type="entry name" value="Pept_tRNA_hydro"/>
    <property type="match status" value="1"/>
</dbReference>
<dbReference type="SUPFAM" id="SSF53178">
    <property type="entry name" value="Peptidyl-tRNA hydrolase-like"/>
    <property type="match status" value="1"/>
</dbReference>
<dbReference type="PROSITE" id="PS01195">
    <property type="entry name" value="PEPT_TRNA_HYDROL_1"/>
    <property type="match status" value="1"/>
</dbReference>
<dbReference type="PROSITE" id="PS01196">
    <property type="entry name" value="PEPT_TRNA_HYDROL_2"/>
    <property type="match status" value="1"/>
</dbReference>